<name>PPR73_ARATH</name>
<dbReference type="EMBL" id="AC022314">
    <property type="protein sequence ID" value="AAF79685.1"/>
    <property type="molecule type" value="Genomic_DNA"/>
</dbReference>
<dbReference type="EMBL" id="CP002684">
    <property type="protein sequence ID" value="AEE32010.2"/>
    <property type="molecule type" value="Genomic_DNA"/>
</dbReference>
<dbReference type="PIR" id="G96503">
    <property type="entry name" value="G96503"/>
</dbReference>
<dbReference type="RefSeq" id="NP_175064.3">
    <property type="nucleotide sequence ID" value="NM_103524.3"/>
</dbReference>
<dbReference type="SMR" id="Q9LP03"/>
<dbReference type="FunCoup" id="Q9LP03">
    <property type="interactions" value="314"/>
</dbReference>
<dbReference type="STRING" id="3702.Q9LP03"/>
<dbReference type="PaxDb" id="3702-AT1G43980.1"/>
<dbReference type="EnsemblPlants" id="AT1G43980.1">
    <property type="protein sequence ID" value="AT1G43980.1"/>
    <property type="gene ID" value="AT1G43980"/>
</dbReference>
<dbReference type="GeneID" id="840997"/>
<dbReference type="Gramene" id="AT1G43980.1">
    <property type="protein sequence ID" value="AT1G43980.1"/>
    <property type="gene ID" value="AT1G43980"/>
</dbReference>
<dbReference type="KEGG" id="ath:AT1G43980"/>
<dbReference type="Araport" id="AT1G43980"/>
<dbReference type="TAIR" id="AT1G43980"/>
<dbReference type="eggNOG" id="KOG4197">
    <property type="taxonomic scope" value="Eukaryota"/>
</dbReference>
<dbReference type="HOGENOM" id="CLU_002706_15_10_1"/>
<dbReference type="InParanoid" id="Q9LP03"/>
<dbReference type="OMA" id="CKSGHED"/>
<dbReference type="OrthoDB" id="1855397at2759"/>
<dbReference type="PhylomeDB" id="Q9LP03"/>
<dbReference type="PRO" id="PR:Q9LP03"/>
<dbReference type="Proteomes" id="UP000006548">
    <property type="component" value="Chromosome 1"/>
</dbReference>
<dbReference type="ExpressionAtlas" id="Q9LP03">
    <property type="expression patterns" value="baseline and differential"/>
</dbReference>
<dbReference type="GO" id="GO:0005739">
    <property type="term" value="C:mitochondrion"/>
    <property type="evidence" value="ECO:0007669"/>
    <property type="project" value="UniProtKB-SubCell"/>
</dbReference>
<dbReference type="GO" id="GO:0003723">
    <property type="term" value="F:RNA binding"/>
    <property type="evidence" value="ECO:0007669"/>
    <property type="project" value="InterPro"/>
</dbReference>
<dbReference type="GO" id="GO:0009451">
    <property type="term" value="P:RNA modification"/>
    <property type="evidence" value="ECO:0007669"/>
    <property type="project" value="InterPro"/>
</dbReference>
<dbReference type="FunFam" id="1.25.40.10:FF:000158">
    <property type="entry name" value="pentatricopeptide repeat-containing protein At2g33680"/>
    <property type="match status" value="1"/>
</dbReference>
<dbReference type="FunFam" id="1.25.40.10:FF:000442">
    <property type="entry name" value="Pentatricopeptide repeat-containing protein At3g49710"/>
    <property type="match status" value="1"/>
</dbReference>
<dbReference type="Gene3D" id="1.25.40.10">
    <property type="entry name" value="Tetratricopeptide repeat domain"/>
    <property type="match status" value="4"/>
</dbReference>
<dbReference type="InterPro" id="IPR002885">
    <property type="entry name" value="Pentatricopeptide_rpt"/>
</dbReference>
<dbReference type="InterPro" id="IPR046960">
    <property type="entry name" value="PPR_At4g14850-like_plant"/>
</dbReference>
<dbReference type="InterPro" id="IPR011990">
    <property type="entry name" value="TPR-like_helical_dom_sf"/>
</dbReference>
<dbReference type="NCBIfam" id="TIGR00756">
    <property type="entry name" value="PPR"/>
    <property type="match status" value="3"/>
</dbReference>
<dbReference type="PANTHER" id="PTHR47926:SF479">
    <property type="entry name" value="PENTACOTRIPEPTIDE-REPEAT REGION OF PRORP DOMAIN-CONTAINING PROTEIN"/>
    <property type="match status" value="1"/>
</dbReference>
<dbReference type="PANTHER" id="PTHR47926">
    <property type="entry name" value="PENTATRICOPEPTIDE REPEAT-CONTAINING PROTEIN"/>
    <property type="match status" value="1"/>
</dbReference>
<dbReference type="Pfam" id="PF01535">
    <property type="entry name" value="PPR"/>
    <property type="match status" value="3"/>
</dbReference>
<dbReference type="Pfam" id="PF13041">
    <property type="entry name" value="PPR_2"/>
    <property type="match status" value="2"/>
</dbReference>
<dbReference type="PROSITE" id="PS51375">
    <property type="entry name" value="PPR"/>
    <property type="match status" value="12"/>
</dbReference>
<feature type="transit peptide" description="Mitochondrion" evidence="1">
    <location>
        <begin position="1"/>
        <end position="30"/>
    </location>
</feature>
<feature type="chain" id="PRO_0000342814" description="Pentatricopeptide repeat-containing protein At1g43980, mitochondrial">
    <location>
        <begin position="31"/>
        <end position="633"/>
    </location>
</feature>
<feature type="repeat" description="PPR 1">
    <location>
        <begin position="50"/>
        <end position="80"/>
    </location>
</feature>
<feature type="repeat" description="PPR 2">
    <location>
        <begin position="81"/>
        <end position="111"/>
    </location>
</feature>
<feature type="repeat" description="PPR 3">
    <location>
        <begin position="112"/>
        <end position="146"/>
    </location>
</feature>
<feature type="repeat" description="PPR 4">
    <location>
        <begin position="147"/>
        <end position="178"/>
    </location>
</feature>
<feature type="repeat" description="PPR 5">
    <location>
        <begin position="180"/>
        <end position="210"/>
    </location>
</feature>
<feature type="repeat" description="PPR 6">
    <location>
        <begin position="211"/>
        <end position="245"/>
    </location>
</feature>
<feature type="repeat" description="PPR 7">
    <location>
        <begin position="246"/>
        <end position="280"/>
    </location>
</feature>
<feature type="repeat" description="PPR 8">
    <location>
        <begin position="281"/>
        <end position="311"/>
    </location>
</feature>
<feature type="repeat" description="PPR 9">
    <location>
        <begin position="312"/>
        <end position="346"/>
    </location>
</feature>
<feature type="repeat" description="PPR 10">
    <location>
        <begin position="347"/>
        <end position="380"/>
    </location>
</feature>
<feature type="repeat" description="PPR 11">
    <location>
        <begin position="381"/>
        <end position="411"/>
    </location>
</feature>
<feature type="repeat" description="PPR 12">
    <location>
        <begin position="412"/>
        <end position="447"/>
    </location>
</feature>
<feature type="repeat" description="PPR 13">
    <location>
        <begin position="448"/>
        <end position="483"/>
    </location>
</feature>
<feature type="repeat" description="PPR 14">
    <location>
        <begin position="484"/>
        <end position="514"/>
    </location>
</feature>
<feature type="region of interest" description="Type E motif">
    <location>
        <begin position="519"/>
        <end position="594"/>
    </location>
</feature>
<protein>
    <recommendedName>
        <fullName>Pentatricopeptide repeat-containing protein At1g43980, mitochondrial</fullName>
    </recommendedName>
</protein>
<organism>
    <name type="scientific">Arabidopsis thaliana</name>
    <name type="common">Mouse-ear cress</name>
    <dbReference type="NCBI Taxonomy" id="3702"/>
    <lineage>
        <taxon>Eukaryota</taxon>
        <taxon>Viridiplantae</taxon>
        <taxon>Streptophyta</taxon>
        <taxon>Embryophyta</taxon>
        <taxon>Tracheophyta</taxon>
        <taxon>Spermatophyta</taxon>
        <taxon>Magnoliopsida</taxon>
        <taxon>eudicotyledons</taxon>
        <taxon>Gunneridae</taxon>
        <taxon>Pentapetalae</taxon>
        <taxon>rosids</taxon>
        <taxon>malvids</taxon>
        <taxon>Brassicales</taxon>
        <taxon>Brassicaceae</taxon>
        <taxon>Camelineae</taxon>
        <taxon>Arabidopsis</taxon>
    </lineage>
</organism>
<proteinExistence type="inferred from homology"/>
<reference key="1">
    <citation type="journal article" date="2000" name="Nature">
        <title>Sequence and analysis of chromosome 1 of the plant Arabidopsis thaliana.</title>
        <authorList>
            <person name="Theologis A."/>
            <person name="Ecker J.R."/>
            <person name="Palm C.J."/>
            <person name="Federspiel N.A."/>
            <person name="Kaul S."/>
            <person name="White O."/>
            <person name="Alonso J."/>
            <person name="Altafi H."/>
            <person name="Araujo R."/>
            <person name="Bowman C.L."/>
            <person name="Brooks S.Y."/>
            <person name="Buehler E."/>
            <person name="Chan A."/>
            <person name="Chao Q."/>
            <person name="Chen H."/>
            <person name="Cheuk R.F."/>
            <person name="Chin C.W."/>
            <person name="Chung M.K."/>
            <person name="Conn L."/>
            <person name="Conway A.B."/>
            <person name="Conway A.R."/>
            <person name="Creasy T.H."/>
            <person name="Dewar K."/>
            <person name="Dunn P."/>
            <person name="Etgu P."/>
            <person name="Feldblyum T.V."/>
            <person name="Feng J.-D."/>
            <person name="Fong B."/>
            <person name="Fujii C.Y."/>
            <person name="Gill J.E."/>
            <person name="Goldsmith A.D."/>
            <person name="Haas B."/>
            <person name="Hansen N.F."/>
            <person name="Hughes B."/>
            <person name="Huizar L."/>
            <person name="Hunter J.L."/>
            <person name="Jenkins J."/>
            <person name="Johnson-Hopson C."/>
            <person name="Khan S."/>
            <person name="Khaykin E."/>
            <person name="Kim C.J."/>
            <person name="Koo H.L."/>
            <person name="Kremenetskaia I."/>
            <person name="Kurtz D.B."/>
            <person name="Kwan A."/>
            <person name="Lam B."/>
            <person name="Langin-Hooper S."/>
            <person name="Lee A."/>
            <person name="Lee J.M."/>
            <person name="Lenz C.A."/>
            <person name="Li J.H."/>
            <person name="Li Y.-P."/>
            <person name="Lin X."/>
            <person name="Liu S.X."/>
            <person name="Liu Z.A."/>
            <person name="Luros J.S."/>
            <person name="Maiti R."/>
            <person name="Marziali A."/>
            <person name="Militscher J."/>
            <person name="Miranda M."/>
            <person name="Nguyen M."/>
            <person name="Nierman W.C."/>
            <person name="Osborne B.I."/>
            <person name="Pai G."/>
            <person name="Peterson J."/>
            <person name="Pham P.K."/>
            <person name="Rizzo M."/>
            <person name="Rooney T."/>
            <person name="Rowley D."/>
            <person name="Sakano H."/>
            <person name="Salzberg S.L."/>
            <person name="Schwartz J.R."/>
            <person name="Shinn P."/>
            <person name="Southwick A.M."/>
            <person name="Sun H."/>
            <person name="Tallon L.J."/>
            <person name="Tambunga G."/>
            <person name="Toriumi M.J."/>
            <person name="Town C.D."/>
            <person name="Utterback T."/>
            <person name="Van Aken S."/>
            <person name="Vaysberg M."/>
            <person name="Vysotskaia V.S."/>
            <person name="Walker M."/>
            <person name="Wu D."/>
            <person name="Yu G."/>
            <person name="Fraser C.M."/>
            <person name="Venter J.C."/>
            <person name="Davis R.W."/>
        </authorList>
    </citation>
    <scope>NUCLEOTIDE SEQUENCE [LARGE SCALE GENOMIC DNA]</scope>
    <source>
        <strain>cv. Columbia</strain>
    </source>
</reference>
<reference key="2">
    <citation type="journal article" date="2017" name="Plant J.">
        <title>Araport11: a complete reannotation of the Arabidopsis thaliana reference genome.</title>
        <authorList>
            <person name="Cheng C.Y."/>
            <person name="Krishnakumar V."/>
            <person name="Chan A.P."/>
            <person name="Thibaud-Nissen F."/>
            <person name="Schobel S."/>
            <person name="Town C.D."/>
        </authorList>
    </citation>
    <scope>GENOME REANNOTATION</scope>
    <source>
        <strain>cv. Columbia</strain>
    </source>
</reference>
<reference key="3">
    <citation type="journal article" date="2004" name="Plant Cell">
        <title>Genome-wide analysis of Arabidopsis pentatricopeptide repeat proteins reveals their essential role in organelle biogenesis.</title>
        <authorList>
            <person name="Lurin C."/>
            <person name="Andres C."/>
            <person name="Aubourg S."/>
            <person name="Bellaoui M."/>
            <person name="Bitton F."/>
            <person name="Bruyere C."/>
            <person name="Caboche M."/>
            <person name="Debast C."/>
            <person name="Gualberto J."/>
            <person name="Hoffmann B."/>
            <person name="Lecharny A."/>
            <person name="Le Ret M."/>
            <person name="Martin-Magniette M.-L."/>
            <person name="Mireau H."/>
            <person name="Peeters N."/>
            <person name="Renou J.-P."/>
            <person name="Szurek B."/>
            <person name="Taconnat L."/>
            <person name="Small I."/>
        </authorList>
    </citation>
    <scope>GENE FAMILY</scope>
</reference>
<sequence length="633" mass="71460">MFQLLRRAHGLCMPSSLYFSRLVNRSLLSKSPTLAKIVHAQLLEAGFVRTTYWGNRCLQLYFKSGSVINALQLFDDIPDKNTITWNVCLKGLFKNGYLNNALDLFDEMPERDVVSWNTMISGLVSCGFHEYGIRVFFDMQRWEIRPTEFTFSILASLVTCVRHGEQIHGNAICSGVSRYNLVVWNSVMDMYRRLGVFDYALSVFLTMEDRDVVSWNCLILSCSDSGNKEVALDQFWLMREMEIQPDEYTVSMVVSICSDLRELSKGKQALALCIKMGFLSNSIVLGAGIDMFSKCNRLDDSVKLFRELEKWDSVLCNSMIGSYSWHCCGEDALRLFILAMTQSVRPDKFTFSSVLSSMNAVMLDHGADVHSLVIKLGFDLDTAVATSLMEMYFKTGSVDLAMGVFAKTDGKDLIFWNTVIMGLARNSRAVESLAIFNQLLMNQSLKPDRVTLMGILVACCYAGFVNEGIQIFSSMEKAHGVNPGNEHYACIIELLCRVGMINEAKDIADKIPFEPSSHIWEPILCASLDLGDTRLAETVAKTMLESEPKSSFPYLVLIKIYEMTWRWENSVKLRYAMNEHKLKSAQGSSKISIESSVFSFEADQLQIHGGHDTCALLDLLSWDSFDQKIHWSA</sequence>
<keyword id="KW-0496">Mitochondrion</keyword>
<keyword id="KW-1185">Reference proteome</keyword>
<keyword id="KW-0677">Repeat</keyword>
<keyword id="KW-0809">Transit peptide</keyword>
<comment type="subcellular location">
    <subcellularLocation>
        <location evidence="2">Mitochondrion</location>
    </subcellularLocation>
</comment>
<comment type="similarity">
    <text evidence="2">Belongs to the PPR family. PCMP-E subfamily.</text>
</comment>
<comment type="online information" name="Pentatricopeptide repeat proteins">
    <link uri="https://ppr.plantenergy.uwa.edu.au"/>
</comment>
<gene>
    <name type="primary">PCMP-E58</name>
    <name type="ordered locus">At1g43980</name>
    <name type="ORF">F9C16.15</name>
</gene>
<accession>Q9LP03</accession>
<accession>F4IED8</accession>
<evidence type="ECO:0000255" key="1"/>
<evidence type="ECO:0000305" key="2"/>